<organism>
    <name type="scientific">Eleusine indica</name>
    <name type="common">Goosegrass</name>
    <name type="synonym">Cynosurus indicus</name>
    <dbReference type="NCBI Taxonomy" id="29674"/>
    <lineage>
        <taxon>Eukaryota</taxon>
        <taxon>Viridiplantae</taxon>
        <taxon>Streptophyta</taxon>
        <taxon>Embryophyta</taxon>
        <taxon>Tracheophyta</taxon>
        <taxon>Spermatophyta</taxon>
        <taxon>Magnoliopsida</taxon>
        <taxon>Liliopsida</taxon>
        <taxon>Poales</taxon>
        <taxon>Poaceae</taxon>
        <taxon>PACMAD clade</taxon>
        <taxon>Chloridoideae</taxon>
        <taxon>Cynodonteae</taxon>
        <taxon>Eleusininae</taxon>
        <taxon>Eleusine</taxon>
    </lineage>
</organism>
<dbReference type="EMBL" id="AF059288">
    <property type="protein sequence ID" value="AAD20179.1"/>
    <property type="molecule type" value="mRNA"/>
</dbReference>
<dbReference type="SMR" id="Q9ZPN9"/>
<dbReference type="GO" id="GO:0005737">
    <property type="term" value="C:cytoplasm"/>
    <property type="evidence" value="ECO:0007669"/>
    <property type="project" value="UniProtKB-KW"/>
</dbReference>
<dbReference type="GO" id="GO:0005874">
    <property type="term" value="C:microtubule"/>
    <property type="evidence" value="ECO:0007669"/>
    <property type="project" value="UniProtKB-KW"/>
</dbReference>
<dbReference type="GO" id="GO:0005525">
    <property type="term" value="F:GTP binding"/>
    <property type="evidence" value="ECO:0007669"/>
    <property type="project" value="UniProtKB-KW"/>
</dbReference>
<dbReference type="GO" id="GO:0003924">
    <property type="term" value="F:GTPase activity"/>
    <property type="evidence" value="ECO:0007669"/>
    <property type="project" value="InterPro"/>
</dbReference>
<dbReference type="GO" id="GO:0046872">
    <property type="term" value="F:metal ion binding"/>
    <property type="evidence" value="ECO:0007669"/>
    <property type="project" value="UniProtKB-KW"/>
</dbReference>
<dbReference type="GO" id="GO:0005200">
    <property type="term" value="F:structural constituent of cytoskeleton"/>
    <property type="evidence" value="ECO:0007669"/>
    <property type="project" value="InterPro"/>
</dbReference>
<dbReference type="GO" id="GO:0007017">
    <property type="term" value="P:microtubule-based process"/>
    <property type="evidence" value="ECO:0007669"/>
    <property type="project" value="InterPro"/>
</dbReference>
<dbReference type="CDD" id="cd02187">
    <property type="entry name" value="beta_tubulin"/>
    <property type="match status" value="1"/>
</dbReference>
<dbReference type="FunFam" id="1.10.287.600:FF:000002">
    <property type="entry name" value="Tubulin beta chain"/>
    <property type="match status" value="1"/>
</dbReference>
<dbReference type="FunFam" id="3.30.1330.20:FF:000002">
    <property type="entry name" value="Tubulin beta chain"/>
    <property type="match status" value="1"/>
</dbReference>
<dbReference type="FunFam" id="3.40.50.1440:FF:000005">
    <property type="entry name" value="Tubulin beta chain"/>
    <property type="match status" value="1"/>
</dbReference>
<dbReference type="Gene3D" id="1.10.287.600">
    <property type="entry name" value="Helix hairpin bin"/>
    <property type="match status" value="1"/>
</dbReference>
<dbReference type="Gene3D" id="3.30.1330.20">
    <property type="entry name" value="Tubulin/FtsZ, C-terminal domain"/>
    <property type="match status" value="1"/>
</dbReference>
<dbReference type="Gene3D" id="3.40.50.1440">
    <property type="entry name" value="Tubulin/FtsZ, GTPase domain"/>
    <property type="match status" value="1"/>
</dbReference>
<dbReference type="InterPro" id="IPR013838">
    <property type="entry name" value="Beta-tubulin_BS"/>
</dbReference>
<dbReference type="InterPro" id="IPR002453">
    <property type="entry name" value="Beta_tubulin"/>
</dbReference>
<dbReference type="InterPro" id="IPR008280">
    <property type="entry name" value="Tub_FtsZ_C"/>
</dbReference>
<dbReference type="InterPro" id="IPR000217">
    <property type="entry name" value="Tubulin"/>
</dbReference>
<dbReference type="InterPro" id="IPR037103">
    <property type="entry name" value="Tubulin/FtsZ-like_C"/>
</dbReference>
<dbReference type="InterPro" id="IPR018316">
    <property type="entry name" value="Tubulin/FtsZ_2-layer-sand-dom"/>
</dbReference>
<dbReference type="InterPro" id="IPR036525">
    <property type="entry name" value="Tubulin/FtsZ_GTPase_sf"/>
</dbReference>
<dbReference type="InterPro" id="IPR023123">
    <property type="entry name" value="Tubulin_C"/>
</dbReference>
<dbReference type="InterPro" id="IPR017975">
    <property type="entry name" value="Tubulin_CS"/>
</dbReference>
<dbReference type="InterPro" id="IPR003008">
    <property type="entry name" value="Tubulin_FtsZ_GTPase"/>
</dbReference>
<dbReference type="PANTHER" id="PTHR11588">
    <property type="entry name" value="TUBULIN"/>
    <property type="match status" value="1"/>
</dbReference>
<dbReference type="Pfam" id="PF00091">
    <property type="entry name" value="Tubulin"/>
    <property type="match status" value="1"/>
</dbReference>
<dbReference type="Pfam" id="PF03953">
    <property type="entry name" value="Tubulin_C"/>
    <property type="match status" value="1"/>
</dbReference>
<dbReference type="PRINTS" id="PR01163">
    <property type="entry name" value="BETATUBULIN"/>
</dbReference>
<dbReference type="PRINTS" id="PR01161">
    <property type="entry name" value="TUBULIN"/>
</dbReference>
<dbReference type="SMART" id="SM00864">
    <property type="entry name" value="Tubulin"/>
    <property type="match status" value="1"/>
</dbReference>
<dbReference type="SMART" id="SM00865">
    <property type="entry name" value="Tubulin_C"/>
    <property type="match status" value="1"/>
</dbReference>
<dbReference type="SUPFAM" id="SSF55307">
    <property type="entry name" value="Tubulin C-terminal domain-like"/>
    <property type="match status" value="1"/>
</dbReference>
<dbReference type="SUPFAM" id="SSF52490">
    <property type="entry name" value="Tubulin nucleotide-binding domain-like"/>
    <property type="match status" value="1"/>
</dbReference>
<dbReference type="PROSITE" id="PS00227">
    <property type="entry name" value="TUBULIN"/>
    <property type="match status" value="1"/>
</dbReference>
<dbReference type="PROSITE" id="PS00228">
    <property type="entry name" value="TUBULIN_B_AUTOREG"/>
    <property type="match status" value="1"/>
</dbReference>
<proteinExistence type="evidence at transcript level"/>
<gene>
    <name type="primary">TUBB2</name>
    <name type="synonym">TUB2</name>
</gene>
<feature type="chain" id="PRO_0000048343" description="Tubulin beta-2 chain">
    <location>
        <begin position="1"/>
        <end position="448"/>
    </location>
</feature>
<feature type="region of interest" description="Disordered" evidence="3">
    <location>
        <begin position="421"/>
        <end position="448"/>
    </location>
</feature>
<feature type="compositionally biased region" description="Acidic residues" evidence="3">
    <location>
        <begin position="429"/>
        <end position="448"/>
    </location>
</feature>
<feature type="binding site" evidence="2">
    <location>
        <position position="11"/>
    </location>
    <ligand>
        <name>GTP</name>
        <dbReference type="ChEBI" id="CHEBI:37565"/>
    </ligand>
</feature>
<feature type="binding site" evidence="1">
    <location>
        <position position="69"/>
    </location>
    <ligand>
        <name>GTP</name>
        <dbReference type="ChEBI" id="CHEBI:37565"/>
    </ligand>
</feature>
<feature type="binding site" evidence="1">
    <location>
        <position position="69"/>
    </location>
    <ligand>
        <name>Mg(2+)</name>
        <dbReference type="ChEBI" id="CHEBI:18420"/>
    </ligand>
</feature>
<feature type="binding site" evidence="2">
    <location>
        <position position="138"/>
    </location>
    <ligand>
        <name>GTP</name>
        <dbReference type="ChEBI" id="CHEBI:37565"/>
    </ligand>
</feature>
<feature type="binding site" evidence="2">
    <location>
        <position position="142"/>
    </location>
    <ligand>
        <name>GTP</name>
        <dbReference type="ChEBI" id="CHEBI:37565"/>
    </ligand>
</feature>
<feature type="binding site" evidence="2">
    <location>
        <position position="143"/>
    </location>
    <ligand>
        <name>GTP</name>
        <dbReference type="ChEBI" id="CHEBI:37565"/>
    </ligand>
</feature>
<feature type="binding site" evidence="2">
    <location>
        <position position="144"/>
    </location>
    <ligand>
        <name>GTP</name>
        <dbReference type="ChEBI" id="CHEBI:37565"/>
    </ligand>
</feature>
<feature type="binding site" evidence="2">
    <location>
        <position position="204"/>
    </location>
    <ligand>
        <name>GTP</name>
        <dbReference type="ChEBI" id="CHEBI:37565"/>
    </ligand>
</feature>
<feature type="binding site" evidence="2">
    <location>
        <position position="226"/>
    </location>
    <ligand>
        <name>GTP</name>
        <dbReference type="ChEBI" id="CHEBI:37565"/>
    </ligand>
</feature>
<name>TBB2_ELEIN</name>
<accession>Q9ZPN9</accession>
<protein>
    <recommendedName>
        <fullName>Tubulin beta-2 chain</fullName>
    </recommendedName>
    <alternativeName>
        <fullName>Beta-2-tubulin</fullName>
    </alternativeName>
</protein>
<reference key="1">
    <citation type="journal article" date="1999" name="Plant Mol. Biol.">
        <title>Molecular characterization of four beta-tubulin genes from dinitroaniline susceptible and resistant biotypes of Eleusine indica.</title>
        <authorList>
            <person name="Yamamoto E."/>
            <person name="Baird W.V."/>
        </authorList>
    </citation>
    <scope>NUCLEOTIDE SEQUENCE [MRNA]</scope>
</reference>
<evidence type="ECO:0000250" key="1">
    <source>
        <dbReference type="UniProtKB" id="P68363"/>
    </source>
</evidence>
<evidence type="ECO:0000250" key="2">
    <source>
        <dbReference type="UniProtKB" id="Q13509"/>
    </source>
</evidence>
<evidence type="ECO:0000256" key="3">
    <source>
        <dbReference type="SAM" id="MobiDB-lite"/>
    </source>
</evidence>
<evidence type="ECO:0000305" key="4"/>
<comment type="function">
    <text>Tubulin is the major constituent of microtubules, a cylinder consisting of laterally associated linear protofilaments composed of alpha- and beta-tubulin heterodimers. Microtubules grow by the addition of GTP-tubulin dimers to the microtubule end, where a stabilizing cap forms. Below the cap, tubulin dimers are in GDP-bound state, owing to GTPase activity of alpha-tubulin.</text>
</comment>
<comment type="cofactor">
    <cofactor evidence="1">
        <name>Mg(2+)</name>
        <dbReference type="ChEBI" id="CHEBI:18420"/>
    </cofactor>
</comment>
<comment type="subunit">
    <text>Dimer of alpha and beta chains. A typical microtubule is a hollow water-filled tube with an outer diameter of 25 nm and an inner diameter of 15 nM. Alpha-beta heterodimers associate head-to-tail to form protofilaments running lengthwise along the microtubule wall with the beta-tubulin subunit facing the microtubule plus end conferring a structural polarity. Microtubules usually have 13 protofilaments but different protofilament numbers can be found in some organisms and specialized cells.</text>
</comment>
<comment type="subcellular location">
    <subcellularLocation>
        <location>Cytoplasm</location>
        <location>Cytoskeleton</location>
    </subcellularLocation>
</comment>
<comment type="similarity">
    <text evidence="4">Belongs to the tubulin family.</text>
</comment>
<keyword id="KW-0963">Cytoplasm</keyword>
<keyword id="KW-0206">Cytoskeleton</keyword>
<keyword id="KW-0342">GTP-binding</keyword>
<keyword id="KW-0460">Magnesium</keyword>
<keyword id="KW-0479">Metal-binding</keyword>
<keyword id="KW-0493">Microtubule</keyword>
<keyword id="KW-0547">Nucleotide-binding</keyword>
<sequence>MREILHIQGGQCGNQIGAKFWEVVCDEHGIDPTGRYTGTSDLQLERVNVYYNEASCGRFVPRAVLMDLEPGTMDSVRTGPYGQIFRPDNFVFGQSGAGNNWAKGHYTEGAELIDSVLDVVRKEAENCDCLQGFQVCHSLGGGTGSGMGTLLISKIREEYPDRMMLTFSVFPSPKVSDTVVEPYNATLSVHQLVENADECMVLDNEALYDICFRTLKLTTPSFGDLNHLISATMSGVTCCLRFPGQLNSDLRKLAVNLIPFPRLHFFMVGFAPLTSRGSQQYRALTVPELTQQMWDAKNMMCAADPRHGRYLTASAMFRGKMSTKEVDEQMINVQNKNSSYFVEWIPNNVKSSVCDIPPRGLSMASTFIGNSTSIQEMFRRVSEQFTAMFRRKAFLHWYTGEGMDEMEFTEAESNMNDLVSEYQQYQDATADEDGEYEDELDGQEEEDM</sequence>